<organism>
    <name type="scientific">Shewanella baltica (strain OS155 / ATCC BAA-1091)</name>
    <dbReference type="NCBI Taxonomy" id="325240"/>
    <lineage>
        <taxon>Bacteria</taxon>
        <taxon>Pseudomonadati</taxon>
        <taxon>Pseudomonadota</taxon>
        <taxon>Gammaproteobacteria</taxon>
        <taxon>Alteromonadales</taxon>
        <taxon>Shewanellaceae</taxon>
        <taxon>Shewanella</taxon>
    </lineage>
</organism>
<dbReference type="EMBL" id="CP000563">
    <property type="protein sequence ID" value="ABN61285.1"/>
    <property type="molecule type" value="Genomic_DNA"/>
</dbReference>
<dbReference type="RefSeq" id="WP_011846569.1">
    <property type="nucleotide sequence ID" value="NC_009052.1"/>
</dbReference>
<dbReference type="SMR" id="A3D3H2"/>
<dbReference type="STRING" id="325240.Sbal_1778"/>
<dbReference type="KEGG" id="sbl:Sbal_1778"/>
<dbReference type="HOGENOM" id="CLU_017584_9_4_6"/>
<dbReference type="OrthoDB" id="5683977at2"/>
<dbReference type="Proteomes" id="UP000001557">
    <property type="component" value="Chromosome"/>
</dbReference>
<dbReference type="GO" id="GO:0005737">
    <property type="term" value="C:cytoplasm"/>
    <property type="evidence" value="ECO:0007669"/>
    <property type="project" value="UniProtKB-SubCell"/>
</dbReference>
<dbReference type="GO" id="GO:0003677">
    <property type="term" value="F:DNA binding"/>
    <property type="evidence" value="ECO:0007669"/>
    <property type="project" value="UniProtKB-KW"/>
</dbReference>
<dbReference type="GO" id="GO:0003700">
    <property type="term" value="F:DNA-binding transcription factor activity"/>
    <property type="evidence" value="ECO:0007669"/>
    <property type="project" value="UniProtKB-UniRule"/>
</dbReference>
<dbReference type="GO" id="GO:0000062">
    <property type="term" value="F:fatty-acyl-CoA binding"/>
    <property type="evidence" value="ECO:0007669"/>
    <property type="project" value="InterPro"/>
</dbReference>
<dbReference type="GO" id="GO:0006631">
    <property type="term" value="P:fatty acid metabolic process"/>
    <property type="evidence" value="ECO:0007669"/>
    <property type="project" value="UniProtKB-KW"/>
</dbReference>
<dbReference type="GO" id="GO:0019217">
    <property type="term" value="P:regulation of fatty acid metabolic process"/>
    <property type="evidence" value="ECO:0007669"/>
    <property type="project" value="UniProtKB-UniRule"/>
</dbReference>
<dbReference type="CDD" id="cd07377">
    <property type="entry name" value="WHTH_GntR"/>
    <property type="match status" value="1"/>
</dbReference>
<dbReference type="Gene3D" id="1.20.120.530">
    <property type="entry name" value="GntR ligand-binding domain-like"/>
    <property type="match status" value="1"/>
</dbReference>
<dbReference type="Gene3D" id="1.10.10.10">
    <property type="entry name" value="Winged helix-like DNA-binding domain superfamily/Winged helix DNA-binding domain"/>
    <property type="match status" value="1"/>
</dbReference>
<dbReference type="HAMAP" id="MF_00696">
    <property type="entry name" value="HTH_FadR"/>
    <property type="match status" value="1"/>
</dbReference>
<dbReference type="InterPro" id="IPR014178">
    <property type="entry name" value="FA-response_TF_FadR"/>
</dbReference>
<dbReference type="InterPro" id="IPR028374">
    <property type="entry name" value="FadR_C"/>
</dbReference>
<dbReference type="InterPro" id="IPR008920">
    <property type="entry name" value="TF_FadR/GntR_C"/>
</dbReference>
<dbReference type="InterPro" id="IPR000524">
    <property type="entry name" value="Tscrpt_reg_HTH_GntR"/>
</dbReference>
<dbReference type="InterPro" id="IPR036388">
    <property type="entry name" value="WH-like_DNA-bd_sf"/>
</dbReference>
<dbReference type="InterPro" id="IPR036390">
    <property type="entry name" value="WH_DNA-bd_sf"/>
</dbReference>
<dbReference type="NCBIfam" id="TIGR02812">
    <property type="entry name" value="fadR_gamma"/>
    <property type="match status" value="1"/>
</dbReference>
<dbReference type="NCBIfam" id="NF003444">
    <property type="entry name" value="PRK04984.1"/>
    <property type="match status" value="1"/>
</dbReference>
<dbReference type="PANTHER" id="PTHR43537:SF52">
    <property type="entry name" value="FATTY ACID METABOLISM REGULATOR PROTEIN"/>
    <property type="match status" value="1"/>
</dbReference>
<dbReference type="PANTHER" id="PTHR43537">
    <property type="entry name" value="TRANSCRIPTIONAL REGULATOR, GNTR FAMILY"/>
    <property type="match status" value="1"/>
</dbReference>
<dbReference type="Pfam" id="PF07840">
    <property type="entry name" value="FadR_C"/>
    <property type="match status" value="1"/>
</dbReference>
<dbReference type="Pfam" id="PF00392">
    <property type="entry name" value="GntR"/>
    <property type="match status" value="1"/>
</dbReference>
<dbReference type="PRINTS" id="PR00035">
    <property type="entry name" value="HTHGNTR"/>
</dbReference>
<dbReference type="SMART" id="SM00345">
    <property type="entry name" value="HTH_GNTR"/>
    <property type="match status" value="1"/>
</dbReference>
<dbReference type="SUPFAM" id="SSF48008">
    <property type="entry name" value="GntR ligand-binding domain-like"/>
    <property type="match status" value="1"/>
</dbReference>
<dbReference type="SUPFAM" id="SSF46785">
    <property type="entry name" value="Winged helix' DNA-binding domain"/>
    <property type="match status" value="1"/>
</dbReference>
<dbReference type="PROSITE" id="PS50949">
    <property type="entry name" value="HTH_GNTR"/>
    <property type="match status" value="1"/>
</dbReference>
<accession>A3D3H2</accession>
<keyword id="KW-0010">Activator</keyword>
<keyword id="KW-0963">Cytoplasm</keyword>
<keyword id="KW-0238">DNA-binding</keyword>
<keyword id="KW-0276">Fatty acid metabolism</keyword>
<keyword id="KW-0443">Lipid metabolism</keyword>
<keyword id="KW-1185">Reference proteome</keyword>
<keyword id="KW-0678">Repressor</keyword>
<keyword id="KW-0804">Transcription</keyword>
<keyword id="KW-0805">Transcription regulation</keyword>
<gene>
    <name evidence="1" type="primary">fadR</name>
    <name type="ordered locus">Sbal_1778</name>
</gene>
<protein>
    <recommendedName>
        <fullName evidence="1">Fatty acid metabolism regulator protein</fullName>
    </recommendedName>
</protein>
<sequence>MIINAKGPASFAEKYIVRSIWDNKFPPGSILPAERELSELIGVTRTTLREVLQRLARDGWLKIQHGKPTRVNNFWETSGLNILETIADLNPEGFPVLVDQLLSARTNVSAIYFRGALRYNPDTAVDVLAKIHQLEDTAESYAEFDYLLHHTLAFSSGNPLYVLILNGFKGLYSRVGRYYFTSSDARLLALNFYKELEVLAQAKNYLDVPALMRTYGMNSGKMWLQLRDDMPASIAQYN</sequence>
<feature type="chain" id="PRO_1000045464" description="Fatty acid metabolism regulator protein">
    <location>
        <begin position="1"/>
        <end position="238"/>
    </location>
</feature>
<feature type="domain" description="HTH gntR-type" evidence="1">
    <location>
        <begin position="6"/>
        <end position="74"/>
    </location>
</feature>
<feature type="DNA-binding region" description="H-T-H motif" evidence="1">
    <location>
        <begin position="34"/>
        <end position="53"/>
    </location>
</feature>
<evidence type="ECO:0000255" key="1">
    <source>
        <dbReference type="HAMAP-Rule" id="MF_00696"/>
    </source>
</evidence>
<comment type="function">
    <text evidence="1">Multifunctional regulator of fatty acid metabolism.</text>
</comment>
<comment type="subunit">
    <text evidence="1">Homodimer.</text>
</comment>
<comment type="subcellular location">
    <subcellularLocation>
        <location evidence="1">Cytoplasm</location>
    </subcellularLocation>
</comment>
<name>FADR_SHEB5</name>
<proteinExistence type="inferred from homology"/>
<reference key="1">
    <citation type="submission" date="2007-02" db="EMBL/GenBank/DDBJ databases">
        <title>Complete sequence of chromosome of Shewanella baltica OS155.</title>
        <authorList>
            <consortium name="US DOE Joint Genome Institute"/>
            <person name="Copeland A."/>
            <person name="Lucas S."/>
            <person name="Lapidus A."/>
            <person name="Barry K."/>
            <person name="Detter J.C."/>
            <person name="Glavina del Rio T."/>
            <person name="Hammon N."/>
            <person name="Israni S."/>
            <person name="Dalin E."/>
            <person name="Tice H."/>
            <person name="Pitluck S."/>
            <person name="Sims D.R."/>
            <person name="Brettin T."/>
            <person name="Bruce D."/>
            <person name="Han C."/>
            <person name="Tapia R."/>
            <person name="Brainard J."/>
            <person name="Schmutz J."/>
            <person name="Larimer F."/>
            <person name="Land M."/>
            <person name="Hauser L."/>
            <person name="Kyrpides N."/>
            <person name="Mikhailova N."/>
            <person name="Brettar I."/>
            <person name="Klappenbach J."/>
            <person name="Konstantinidis K."/>
            <person name="Rodrigues J."/>
            <person name="Tiedje J."/>
            <person name="Richardson P."/>
        </authorList>
    </citation>
    <scope>NUCLEOTIDE SEQUENCE [LARGE SCALE GENOMIC DNA]</scope>
    <source>
        <strain>OS155 / ATCC BAA-1091</strain>
    </source>
</reference>